<name>EPO_EPICO</name>
<protein>
    <recommendedName>
        <fullName>Erythropoietin</fullName>
    </recommendedName>
</protein>
<proteinExistence type="evidence at transcript level"/>
<sequence>MLQKRGRGLLVLLLMLLEWTRPGLLSPLRPICDLRVLNHFIKEARDAEVAMKSCTEGCSLSESVTVPQTRVDFDVWEKKNGLEQAQEVQSGLWLLQQALNLLRTSVTNTALHSHIDNSIRNLLSINAVLRSLNIQEYTPPASTVALEGTWRVSSATDLLQVHVNFLRGKVRLLLLDAQACQQDVS</sequence>
<dbReference type="EMBL" id="AY735012">
    <property type="protein sequence ID" value="AAW29029.1"/>
    <property type="molecule type" value="mRNA"/>
</dbReference>
<dbReference type="SMR" id="Q5IGQ0"/>
<dbReference type="GO" id="GO:0005615">
    <property type="term" value="C:extracellular space"/>
    <property type="evidence" value="ECO:0007669"/>
    <property type="project" value="TreeGrafter"/>
</dbReference>
<dbReference type="GO" id="GO:0005125">
    <property type="term" value="F:cytokine activity"/>
    <property type="evidence" value="ECO:0007669"/>
    <property type="project" value="TreeGrafter"/>
</dbReference>
<dbReference type="GO" id="GO:0005128">
    <property type="term" value="F:erythropoietin receptor binding"/>
    <property type="evidence" value="ECO:0007669"/>
    <property type="project" value="InterPro"/>
</dbReference>
<dbReference type="GO" id="GO:0005179">
    <property type="term" value="F:hormone activity"/>
    <property type="evidence" value="ECO:0007669"/>
    <property type="project" value="UniProtKB-KW"/>
</dbReference>
<dbReference type="GO" id="GO:0043249">
    <property type="term" value="P:erythrocyte maturation"/>
    <property type="evidence" value="ECO:0007669"/>
    <property type="project" value="UniProtKB-KW"/>
</dbReference>
<dbReference type="GO" id="GO:0048823">
    <property type="term" value="P:nucleate erythrocyte development"/>
    <property type="evidence" value="ECO:0007669"/>
    <property type="project" value="TreeGrafter"/>
</dbReference>
<dbReference type="Gene3D" id="1.20.1250.10">
    <property type="match status" value="1"/>
</dbReference>
<dbReference type="InterPro" id="IPR009079">
    <property type="entry name" value="4_helix_cytokine-like_core"/>
</dbReference>
<dbReference type="InterPro" id="IPR001323">
    <property type="entry name" value="EPO_TPO"/>
</dbReference>
<dbReference type="InterPro" id="IPR003013">
    <property type="entry name" value="Erythroptn"/>
</dbReference>
<dbReference type="PANTHER" id="PTHR10370">
    <property type="entry name" value="ERYTHROPOIETIN"/>
    <property type="match status" value="1"/>
</dbReference>
<dbReference type="PANTHER" id="PTHR10370:SF0">
    <property type="entry name" value="ERYTHROPOIETIN"/>
    <property type="match status" value="1"/>
</dbReference>
<dbReference type="Pfam" id="PF00758">
    <property type="entry name" value="EPO_TPO"/>
    <property type="match status" value="1"/>
</dbReference>
<dbReference type="PIRSF" id="PIRSF001951">
    <property type="entry name" value="EPO"/>
    <property type="match status" value="1"/>
</dbReference>
<dbReference type="PRINTS" id="PR00272">
    <property type="entry name" value="ERYTHROPTN"/>
</dbReference>
<dbReference type="SUPFAM" id="SSF47266">
    <property type="entry name" value="4-helical cytokines"/>
    <property type="match status" value="1"/>
</dbReference>
<organism>
    <name type="scientific">Epinephelus coioides</name>
    <name type="common">Orange-spotted grouper</name>
    <name type="synonym">Epinephelus nebulosus</name>
    <dbReference type="NCBI Taxonomy" id="94232"/>
    <lineage>
        <taxon>Eukaryota</taxon>
        <taxon>Metazoa</taxon>
        <taxon>Chordata</taxon>
        <taxon>Craniata</taxon>
        <taxon>Vertebrata</taxon>
        <taxon>Euteleostomi</taxon>
        <taxon>Actinopterygii</taxon>
        <taxon>Neopterygii</taxon>
        <taxon>Teleostei</taxon>
        <taxon>Neoteleostei</taxon>
        <taxon>Acanthomorphata</taxon>
        <taxon>Eupercaria</taxon>
        <taxon>Perciformes</taxon>
        <taxon>Serranoidei</taxon>
        <taxon>Serranidae</taxon>
        <taxon>Epinephelinae</taxon>
        <taxon>Epinephelini</taxon>
        <taxon>Epinephelus</taxon>
    </lineage>
</organism>
<gene>
    <name type="primary">epo</name>
</gene>
<keyword id="KW-1015">Disulfide bond</keyword>
<keyword id="KW-0265">Erythrocyte maturation</keyword>
<keyword id="KW-0372">Hormone</keyword>
<keyword id="KW-0964">Secreted</keyword>
<keyword id="KW-0732">Signal</keyword>
<accession>Q5IGQ0</accession>
<evidence type="ECO:0000250" key="1"/>
<evidence type="ECO:0000255" key="2"/>
<evidence type="ECO:0000305" key="3"/>
<reference key="1">
    <citation type="submission" date="2005-05" db="EMBL/GenBank/DDBJ databases">
        <title>The molecular responses of marine fish to both oxygen deprivation and xenobiotic exposure.</title>
        <authorList>
            <person name="Yu R.M.K."/>
            <person name="Wu R.S.S."/>
            <person name="Lam G.K.W."/>
            <person name="Kong R.Y.C."/>
        </authorList>
    </citation>
    <scope>NUCLEOTIDE SEQUENCE [MRNA]</scope>
</reference>
<feature type="signal peptide" evidence="2">
    <location>
        <begin position="1"/>
        <end position="22"/>
    </location>
</feature>
<feature type="chain" id="PRO_0000313666" description="Erythropoietin">
    <location>
        <begin position="23"/>
        <end position="185"/>
    </location>
</feature>
<feature type="disulfide bond" evidence="1">
    <location>
        <begin position="32"/>
        <end position="180"/>
    </location>
</feature>
<feature type="disulfide bond" evidence="1">
    <location>
        <begin position="54"/>
        <end position="58"/>
    </location>
</feature>
<comment type="function">
    <text evidence="1">Erythropoietin is the principal hormone involved in the regulation of erythrocyte differentiation and the maintenance of a physiological level of circulating erythrocyte mass.</text>
</comment>
<comment type="subcellular location">
    <subcellularLocation>
        <location evidence="1">Secreted</location>
    </subcellularLocation>
</comment>
<comment type="similarity">
    <text evidence="3">Belongs to the EPO/TPO family.</text>
</comment>